<dbReference type="EC" id="2.1.2.1" evidence="1"/>
<dbReference type="EMBL" id="CP001129">
    <property type="protein sequence ID" value="ACG62380.1"/>
    <property type="molecule type" value="Genomic_DNA"/>
</dbReference>
<dbReference type="RefSeq" id="WP_012515648.1">
    <property type="nucleotide sequence ID" value="NC_011134.1"/>
</dbReference>
<dbReference type="SMR" id="B4U313"/>
<dbReference type="KEGG" id="sez:Sez_1026"/>
<dbReference type="HOGENOM" id="CLU_022477_2_1_9"/>
<dbReference type="UniPathway" id="UPA00193"/>
<dbReference type="UniPathway" id="UPA00288">
    <property type="reaction ID" value="UER01023"/>
</dbReference>
<dbReference type="Proteomes" id="UP000001873">
    <property type="component" value="Chromosome"/>
</dbReference>
<dbReference type="GO" id="GO:0005829">
    <property type="term" value="C:cytosol"/>
    <property type="evidence" value="ECO:0007669"/>
    <property type="project" value="TreeGrafter"/>
</dbReference>
<dbReference type="GO" id="GO:0004372">
    <property type="term" value="F:glycine hydroxymethyltransferase activity"/>
    <property type="evidence" value="ECO:0007669"/>
    <property type="project" value="UniProtKB-UniRule"/>
</dbReference>
<dbReference type="GO" id="GO:0030170">
    <property type="term" value="F:pyridoxal phosphate binding"/>
    <property type="evidence" value="ECO:0007669"/>
    <property type="project" value="UniProtKB-UniRule"/>
</dbReference>
<dbReference type="GO" id="GO:0019264">
    <property type="term" value="P:glycine biosynthetic process from serine"/>
    <property type="evidence" value="ECO:0007669"/>
    <property type="project" value="UniProtKB-UniRule"/>
</dbReference>
<dbReference type="GO" id="GO:0035999">
    <property type="term" value="P:tetrahydrofolate interconversion"/>
    <property type="evidence" value="ECO:0007669"/>
    <property type="project" value="UniProtKB-UniRule"/>
</dbReference>
<dbReference type="CDD" id="cd00378">
    <property type="entry name" value="SHMT"/>
    <property type="match status" value="1"/>
</dbReference>
<dbReference type="FunFam" id="3.40.640.10:FF:000001">
    <property type="entry name" value="Serine hydroxymethyltransferase"/>
    <property type="match status" value="1"/>
</dbReference>
<dbReference type="Gene3D" id="3.90.1150.10">
    <property type="entry name" value="Aspartate Aminotransferase, domain 1"/>
    <property type="match status" value="1"/>
</dbReference>
<dbReference type="Gene3D" id="3.40.640.10">
    <property type="entry name" value="Type I PLP-dependent aspartate aminotransferase-like (Major domain)"/>
    <property type="match status" value="1"/>
</dbReference>
<dbReference type="HAMAP" id="MF_00051">
    <property type="entry name" value="SHMT"/>
    <property type="match status" value="1"/>
</dbReference>
<dbReference type="InterPro" id="IPR015424">
    <property type="entry name" value="PyrdxlP-dep_Trfase"/>
</dbReference>
<dbReference type="InterPro" id="IPR015421">
    <property type="entry name" value="PyrdxlP-dep_Trfase_major"/>
</dbReference>
<dbReference type="InterPro" id="IPR015422">
    <property type="entry name" value="PyrdxlP-dep_Trfase_small"/>
</dbReference>
<dbReference type="InterPro" id="IPR001085">
    <property type="entry name" value="Ser_HO-MeTrfase"/>
</dbReference>
<dbReference type="InterPro" id="IPR049943">
    <property type="entry name" value="Ser_HO-MeTrfase-like"/>
</dbReference>
<dbReference type="InterPro" id="IPR019798">
    <property type="entry name" value="Ser_HO-MeTrfase_PLP_BS"/>
</dbReference>
<dbReference type="InterPro" id="IPR039429">
    <property type="entry name" value="SHMT-like_dom"/>
</dbReference>
<dbReference type="NCBIfam" id="NF000586">
    <property type="entry name" value="PRK00011.1"/>
    <property type="match status" value="1"/>
</dbReference>
<dbReference type="PANTHER" id="PTHR11680">
    <property type="entry name" value="SERINE HYDROXYMETHYLTRANSFERASE"/>
    <property type="match status" value="1"/>
</dbReference>
<dbReference type="PANTHER" id="PTHR11680:SF35">
    <property type="entry name" value="SERINE HYDROXYMETHYLTRANSFERASE 1"/>
    <property type="match status" value="1"/>
</dbReference>
<dbReference type="Pfam" id="PF00464">
    <property type="entry name" value="SHMT"/>
    <property type="match status" value="1"/>
</dbReference>
<dbReference type="PIRSF" id="PIRSF000412">
    <property type="entry name" value="SHMT"/>
    <property type="match status" value="1"/>
</dbReference>
<dbReference type="SUPFAM" id="SSF53383">
    <property type="entry name" value="PLP-dependent transferases"/>
    <property type="match status" value="1"/>
</dbReference>
<dbReference type="PROSITE" id="PS00096">
    <property type="entry name" value="SHMT"/>
    <property type="match status" value="1"/>
</dbReference>
<evidence type="ECO:0000255" key="1">
    <source>
        <dbReference type="HAMAP-Rule" id="MF_00051"/>
    </source>
</evidence>
<comment type="function">
    <text evidence="1">Catalyzes the reversible interconversion of serine and glycine with tetrahydrofolate (THF) serving as the one-carbon carrier. This reaction serves as the major source of one-carbon groups required for the biosynthesis of purines, thymidylate, methionine, and other important biomolecules. Also exhibits THF-independent aldolase activity toward beta-hydroxyamino acids, producing glycine and aldehydes, via a retro-aldol mechanism.</text>
</comment>
<comment type="catalytic activity">
    <reaction evidence="1">
        <text>(6R)-5,10-methylene-5,6,7,8-tetrahydrofolate + glycine + H2O = (6S)-5,6,7,8-tetrahydrofolate + L-serine</text>
        <dbReference type="Rhea" id="RHEA:15481"/>
        <dbReference type="ChEBI" id="CHEBI:15377"/>
        <dbReference type="ChEBI" id="CHEBI:15636"/>
        <dbReference type="ChEBI" id="CHEBI:33384"/>
        <dbReference type="ChEBI" id="CHEBI:57305"/>
        <dbReference type="ChEBI" id="CHEBI:57453"/>
        <dbReference type="EC" id="2.1.2.1"/>
    </reaction>
</comment>
<comment type="cofactor">
    <cofactor evidence="1">
        <name>pyridoxal 5'-phosphate</name>
        <dbReference type="ChEBI" id="CHEBI:597326"/>
    </cofactor>
</comment>
<comment type="pathway">
    <text evidence="1">One-carbon metabolism; tetrahydrofolate interconversion.</text>
</comment>
<comment type="pathway">
    <text evidence="1">Amino-acid biosynthesis; glycine biosynthesis; glycine from L-serine: step 1/1.</text>
</comment>
<comment type="subunit">
    <text evidence="1">Homodimer.</text>
</comment>
<comment type="subcellular location">
    <subcellularLocation>
        <location evidence="1">Cytoplasm</location>
    </subcellularLocation>
</comment>
<comment type="similarity">
    <text evidence="1">Belongs to the SHMT family.</text>
</comment>
<reference key="1">
    <citation type="journal article" date="2008" name="PLoS ONE">
        <title>Genome sequence of a lancefield group C Streptococcus zooepidemicus strain causing epidemic nephritis: new information about an old disease.</title>
        <authorList>
            <person name="Beres S.B."/>
            <person name="Sesso R."/>
            <person name="Pinto S.W.L."/>
            <person name="Hoe N.P."/>
            <person name="Porcella S.F."/>
            <person name="Deleo F.R."/>
            <person name="Musser J.M."/>
        </authorList>
    </citation>
    <scope>NUCLEOTIDE SEQUENCE [LARGE SCALE GENOMIC DNA]</scope>
    <source>
        <strain>MGCS10565</strain>
    </source>
</reference>
<protein>
    <recommendedName>
        <fullName evidence="1">Serine hydroxymethyltransferase</fullName>
        <shortName evidence="1">SHMT</shortName>
        <shortName evidence="1">Serine methylase</shortName>
        <ecNumber evidence="1">2.1.2.1</ecNumber>
    </recommendedName>
</protein>
<name>GLYA_STREM</name>
<organism>
    <name type="scientific">Streptococcus equi subsp. zooepidemicus (strain MGCS10565)</name>
    <dbReference type="NCBI Taxonomy" id="552526"/>
    <lineage>
        <taxon>Bacteria</taxon>
        <taxon>Bacillati</taxon>
        <taxon>Bacillota</taxon>
        <taxon>Bacilli</taxon>
        <taxon>Lactobacillales</taxon>
        <taxon>Streptococcaceae</taxon>
        <taxon>Streptococcus</taxon>
    </lineage>
</organism>
<feature type="chain" id="PRO_1000091581" description="Serine hydroxymethyltransferase">
    <location>
        <begin position="1"/>
        <end position="419"/>
    </location>
</feature>
<feature type="binding site" evidence="1">
    <location>
        <position position="121"/>
    </location>
    <ligand>
        <name>(6S)-5,6,7,8-tetrahydrofolate</name>
        <dbReference type="ChEBI" id="CHEBI:57453"/>
    </ligand>
</feature>
<feature type="binding site" evidence="1">
    <location>
        <begin position="125"/>
        <end position="127"/>
    </location>
    <ligand>
        <name>(6S)-5,6,7,8-tetrahydrofolate</name>
        <dbReference type="ChEBI" id="CHEBI:57453"/>
    </ligand>
</feature>
<feature type="binding site" evidence="1">
    <location>
        <begin position="355"/>
        <end position="357"/>
    </location>
    <ligand>
        <name>(6S)-5,6,7,8-tetrahydrofolate</name>
        <dbReference type="ChEBI" id="CHEBI:57453"/>
    </ligand>
</feature>
<feature type="site" description="Plays an important role in substrate specificity" evidence="1">
    <location>
        <position position="229"/>
    </location>
</feature>
<feature type="modified residue" description="N6-(pyridoxal phosphate)lysine" evidence="1">
    <location>
        <position position="230"/>
    </location>
</feature>
<keyword id="KW-0028">Amino-acid biosynthesis</keyword>
<keyword id="KW-0963">Cytoplasm</keyword>
<keyword id="KW-0554">One-carbon metabolism</keyword>
<keyword id="KW-0663">Pyridoxal phosphate</keyword>
<keyword id="KW-0808">Transferase</keyword>
<accession>B4U313</accession>
<gene>
    <name evidence="1" type="primary">glyA</name>
    <name type="ordered locus">Sez_1026</name>
</gene>
<sequence>MMFNNENYKDYDQELWEAIQAEEDRQEHNIELIASENMVSKAVMQAQGSVLTNKYAEGYPSKRYYGGTEYVDIVESLAIERAKKLFGAAYANVQPHSGSQANAAAYMALINAGDTVLGMDLAAGGHLTHGSPVNFSGKTYQFVGYTVDKETEKLDYAAILKQAKAVQPKLIVAGASAYSRKIDFEQFRFIADQVGAYLMVDMAHIAGLVAAGLHQNPVPYAHIVTSTTHKTLRGPRGGLLLTNDEAIARKMNAAIFPGLQGGPLEHVIAAKAVAFKEALDPAFTDYARAVIANTAAMAEVFAKDDRFRLISGGTDNHLFLVDVTKVIENGKLAQALLDEVNITLNKNAIPFETLSPFKTSGIRIGCAAITSRGMGVDESRTIAHLIIKTLVNHQQPEILEEVRYEVRRLTDAFPLYKKN</sequence>
<proteinExistence type="inferred from homology"/>